<keyword id="KW-0075">B-cell activation</keyword>
<keyword id="KW-0963">Cytoplasm</keyword>
<keyword id="KW-0597">Phosphoprotein</keyword>
<keyword id="KW-1185">Reference proteome</keyword>
<keyword id="KW-0728">SH3 domain</keyword>
<dbReference type="EMBL" id="CR857829">
    <property type="protein sequence ID" value="CAH90085.1"/>
    <property type="molecule type" value="mRNA"/>
</dbReference>
<dbReference type="SMR" id="Q5RDS2"/>
<dbReference type="FunCoup" id="Q5RDS2">
    <property type="interactions" value="1978"/>
</dbReference>
<dbReference type="STRING" id="9601.ENSPPYP00000019851"/>
<dbReference type="eggNOG" id="ENOG502QVFD">
    <property type="taxonomic scope" value="Eukaryota"/>
</dbReference>
<dbReference type="InParanoid" id="Q5RDS2"/>
<dbReference type="Proteomes" id="UP000001595">
    <property type="component" value="Unplaced"/>
</dbReference>
<dbReference type="GO" id="GO:0005737">
    <property type="term" value="C:cytoplasm"/>
    <property type="evidence" value="ECO:0007669"/>
    <property type="project" value="UniProtKB-SubCell"/>
</dbReference>
<dbReference type="GO" id="GO:0005886">
    <property type="term" value="C:plasma membrane"/>
    <property type="evidence" value="ECO:0007669"/>
    <property type="project" value="TreeGrafter"/>
</dbReference>
<dbReference type="GO" id="GO:0042113">
    <property type="term" value="P:B cell activation"/>
    <property type="evidence" value="ECO:0007669"/>
    <property type="project" value="UniProtKB-KW"/>
</dbReference>
<dbReference type="CDD" id="cd13381">
    <property type="entry name" value="PH_Skap-hom_Skap2"/>
    <property type="match status" value="1"/>
</dbReference>
<dbReference type="CDD" id="cd12045">
    <property type="entry name" value="SH3_SKAP2"/>
    <property type="match status" value="1"/>
</dbReference>
<dbReference type="FunFam" id="2.30.29.30:FF:000194">
    <property type="entry name" value="Putative src kinase-associated phosphoprotein 2"/>
    <property type="match status" value="1"/>
</dbReference>
<dbReference type="FunFam" id="2.30.30.40:FF:000097">
    <property type="entry name" value="Putative src kinase-associated phosphoprotein 2"/>
    <property type="match status" value="1"/>
</dbReference>
<dbReference type="Gene3D" id="6.10.250.220">
    <property type="match status" value="1"/>
</dbReference>
<dbReference type="Gene3D" id="2.30.29.30">
    <property type="entry name" value="Pleckstrin-homology domain (PH domain)/Phosphotyrosine-binding domain (PTB)"/>
    <property type="match status" value="1"/>
</dbReference>
<dbReference type="Gene3D" id="2.30.30.40">
    <property type="entry name" value="SH3 Domains"/>
    <property type="match status" value="1"/>
</dbReference>
<dbReference type="InterPro" id="IPR011993">
    <property type="entry name" value="PH-like_dom_sf"/>
</dbReference>
<dbReference type="InterPro" id="IPR001849">
    <property type="entry name" value="PH_domain"/>
</dbReference>
<dbReference type="InterPro" id="IPR036028">
    <property type="entry name" value="SH3-like_dom_sf"/>
</dbReference>
<dbReference type="InterPro" id="IPR001452">
    <property type="entry name" value="SH3_domain"/>
</dbReference>
<dbReference type="InterPro" id="IPR037781">
    <property type="entry name" value="SKAP_fam"/>
</dbReference>
<dbReference type="PANTHER" id="PTHR15129:SF2">
    <property type="entry name" value="SRC KINASE-ASSOCIATED PHOSPHOPROTEIN 2"/>
    <property type="match status" value="1"/>
</dbReference>
<dbReference type="PANTHER" id="PTHR15129">
    <property type="entry name" value="SRC-ASSOCIATED ADAPTOR PROTEIN"/>
    <property type="match status" value="1"/>
</dbReference>
<dbReference type="Pfam" id="PF00169">
    <property type="entry name" value="PH"/>
    <property type="match status" value="1"/>
</dbReference>
<dbReference type="Pfam" id="PF00018">
    <property type="entry name" value="SH3_1"/>
    <property type="match status" value="1"/>
</dbReference>
<dbReference type="PRINTS" id="PR00452">
    <property type="entry name" value="SH3DOMAIN"/>
</dbReference>
<dbReference type="SMART" id="SM00233">
    <property type="entry name" value="PH"/>
    <property type="match status" value="1"/>
</dbReference>
<dbReference type="SMART" id="SM00326">
    <property type="entry name" value="SH3"/>
    <property type="match status" value="1"/>
</dbReference>
<dbReference type="SUPFAM" id="SSF50729">
    <property type="entry name" value="PH domain-like"/>
    <property type="match status" value="1"/>
</dbReference>
<dbReference type="SUPFAM" id="SSF50044">
    <property type="entry name" value="SH3-domain"/>
    <property type="match status" value="1"/>
</dbReference>
<dbReference type="PROSITE" id="PS50003">
    <property type="entry name" value="PH_DOMAIN"/>
    <property type="match status" value="1"/>
</dbReference>
<dbReference type="PROSITE" id="PS50002">
    <property type="entry name" value="SH3"/>
    <property type="match status" value="1"/>
</dbReference>
<name>SKAP2_PONAB</name>
<gene>
    <name type="primary">SKAP2</name>
    <name type="synonym">SCAP2</name>
</gene>
<accession>Q5RDS2</accession>
<proteinExistence type="evidence at transcript level"/>
<feature type="chain" id="PRO_0000270181" description="Src kinase-associated phosphoprotein 2">
    <location>
        <begin position="1"/>
        <end position="359"/>
    </location>
</feature>
<feature type="domain" description="PH" evidence="5">
    <location>
        <begin position="116"/>
        <end position="219"/>
    </location>
</feature>
<feature type="domain" description="SH3" evidence="6">
    <location>
        <begin position="297"/>
        <end position="358"/>
    </location>
</feature>
<feature type="region of interest" description="Disordered" evidence="7">
    <location>
        <begin position="67"/>
        <end position="88"/>
    </location>
</feature>
<feature type="modified residue" description="Phosphoserine" evidence="2">
    <location>
        <position position="5"/>
    </location>
</feature>
<feature type="modified residue" description="Phosphoserine" evidence="2">
    <location>
        <position position="6"/>
    </location>
</feature>
<feature type="modified residue" description="Phosphoserine" evidence="4">
    <location>
        <position position="9"/>
    </location>
</feature>
<feature type="modified residue" description="Phosphotyrosine" evidence="2">
    <location>
        <position position="75"/>
    </location>
</feature>
<feature type="modified residue" description="Phosphoserine" evidence="4">
    <location>
        <position position="87"/>
    </location>
</feature>
<feature type="modified residue" description="Phosphoserine" evidence="4">
    <location>
        <position position="90"/>
    </location>
</feature>
<feature type="modified residue" description="Phosphotyrosine" evidence="3">
    <location>
        <position position="151"/>
    </location>
</feature>
<feature type="modified residue" description="Phosphotyrosine" evidence="2">
    <location>
        <position position="197"/>
    </location>
</feature>
<feature type="modified residue" description="Phosphoserine" evidence="4">
    <location>
        <position position="223"/>
    </location>
</feature>
<feature type="modified residue" description="Phosphotyrosine" evidence="3">
    <location>
        <position position="261"/>
    </location>
</feature>
<feature type="modified residue" description="Phosphoserine" evidence="4">
    <location>
        <position position="286"/>
    </location>
</feature>
<feature type="sequence conflict" description="In Ref. 1; CAH90085." evidence="8" ref="1">
    <original>M</original>
    <variation>V</variation>
    <location>
        <position position="1"/>
    </location>
</feature>
<comment type="function">
    <text evidence="1">May be involved in B-cell and macrophage adhesion processes. In B-cells, may act by coupling the B-cell receptor (BCR) to integrin activation. May play a role in src signaling pathway (By similarity).</text>
</comment>
<comment type="subunit">
    <text evidence="1">Interacts with FYB1, which is required for SKAP2 protein stability. Interacts with PTPNS1. Part of a complex consisting of SKAP2, FYB1 and PTPNS1. Part of a complex consisting of SKAP2, FYB1 and LILRB3. Interacts with LAT, GRB2, PTK2B, and PRAM1. May interact with actin. May interact with FYN, HCK and LYN. Interacts with FASLG (By similarity).</text>
</comment>
<comment type="subcellular location">
    <subcellularLocation>
        <location evidence="1">Cytoplasm</location>
    </subcellularLocation>
</comment>
<comment type="domain">
    <text evidence="1">The SH3 domain interacts with FYB1 and PTK2B.</text>
</comment>
<comment type="similarity">
    <text evidence="8">Belongs to the SKAP family.</text>
</comment>
<protein>
    <recommendedName>
        <fullName>Src kinase-associated phosphoprotein 2</fullName>
    </recommendedName>
    <alternativeName>
        <fullName>Src family-associated phosphoprotein 2</fullName>
    </alternativeName>
</protein>
<organism>
    <name type="scientific">Pongo abelii</name>
    <name type="common">Sumatran orangutan</name>
    <name type="synonym">Pongo pygmaeus abelii</name>
    <dbReference type="NCBI Taxonomy" id="9601"/>
    <lineage>
        <taxon>Eukaryota</taxon>
        <taxon>Metazoa</taxon>
        <taxon>Chordata</taxon>
        <taxon>Craniata</taxon>
        <taxon>Vertebrata</taxon>
        <taxon>Euteleostomi</taxon>
        <taxon>Mammalia</taxon>
        <taxon>Eutheria</taxon>
        <taxon>Euarchontoglires</taxon>
        <taxon>Primates</taxon>
        <taxon>Haplorrhini</taxon>
        <taxon>Catarrhini</taxon>
        <taxon>Hominidae</taxon>
        <taxon>Pongo</taxon>
    </lineage>
</organism>
<sequence>MPNPSSTSSPYPLPEEIRNLLADVETFVADILKGENLSKKAKEKRESLIKKIKDVKSIYLQEFRDKGDAEDGEEYDDPFAGPPDTISLASERYDKDDEATSDGAQFPPIAAQDLPFVLKAGYLEKRRKDHSFLGFEWQKRWCALSKTVFYYYGSDKDKQQKGEFAIDGYSVRMNNALRKDGKKDCCFEISAPDKRIYQFTAASPKDAEEWVQQLKFVLQDMESDIIPEDYDERGELYDDVDHPLPISNLPTSSQPIDDEIYEELPEEEEDSAPVKVVEQRKMGQDSVHHTSGDKSTDYANFYQGLWDCTGAFSDELSFKRGDVIYILSKEYNRYGWWVGEMKGAIGLVPKAYIMEMYDI</sequence>
<evidence type="ECO:0000250" key="1"/>
<evidence type="ECO:0000250" key="2">
    <source>
        <dbReference type="UniProtKB" id="O75563"/>
    </source>
</evidence>
<evidence type="ECO:0000250" key="3">
    <source>
        <dbReference type="UniProtKB" id="Q3UND0"/>
    </source>
</evidence>
<evidence type="ECO:0000250" key="4">
    <source>
        <dbReference type="UniProtKB" id="Q920G0"/>
    </source>
</evidence>
<evidence type="ECO:0000255" key="5">
    <source>
        <dbReference type="PROSITE-ProRule" id="PRU00145"/>
    </source>
</evidence>
<evidence type="ECO:0000255" key="6">
    <source>
        <dbReference type="PROSITE-ProRule" id="PRU00192"/>
    </source>
</evidence>
<evidence type="ECO:0000256" key="7">
    <source>
        <dbReference type="SAM" id="MobiDB-lite"/>
    </source>
</evidence>
<evidence type="ECO:0000305" key="8"/>
<reference key="1">
    <citation type="submission" date="2004-11" db="EMBL/GenBank/DDBJ databases">
        <authorList>
            <consortium name="The German cDNA consortium"/>
        </authorList>
    </citation>
    <scope>NUCLEOTIDE SEQUENCE [LARGE SCALE MRNA]</scope>
    <source>
        <tissue>Brain cortex</tissue>
    </source>
</reference>